<keyword id="KW-0067">ATP-binding</keyword>
<keyword id="KW-0315">Glutamine amidotransferase</keyword>
<keyword id="KW-0332">GMP biosynthesis</keyword>
<keyword id="KW-0436">Ligase</keyword>
<keyword id="KW-0547">Nucleotide-binding</keyword>
<keyword id="KW-0658">Purine biosynthesis</keyword>
<proteinExistence type="inferred from homology"/>
<reference key="1">
    <citation type="journal article" date="2009" name="Vaccine">
        <title>Whole genome sequence analysis of Mycobacterium bovis bacillus Calmette-Guerin (BCG) Tokyo 172: a comparative study of BCG vaccine substrains.</title>
        <authorList>
            <person name="Seki M."/>
            <person name="Honda I."/>
            <person name="Fujita I."/>
            <person name="Yano I."/>
            <person name="Yamamoto S."/>
            <person name="Koyama A."/>
        </authorList>
    </citation>
    <scope>NUCLEOTIDE SEQUENCE [LARGE SCALE GENOMIC DNA]</scope>
    <source>
        <strain>BCG / Tokyo 172 / ATCC 35737 / TMC 1019</strain>
    </source>
</reference>
<name>GUAA_MYCBT</name>
<sequence length="525" mass="56060">MVQPADIDVPETPARPVLVVDFGAQYAQLIARRVREARVFSEVIPHTASIEEIRARQPVALVLSGGPASVYADGAPKLDPALLDLGVPVLGICYGFQAMAQALGGIVAHTGTREYGRTELKVLGGKLHSDLPEVQPVWMSHGDAVTAAPDGFDVVASSAGAPVAAFEAFDRRLAGVQYHPEVMHTPHGQQVLSRFLHDFAGLGAQWTPANIANALIEQVRTQIGDGHAICGLSGGVDSAVAAALVQRAIGDRLTCVFVDHGLLRAGERAQVQRDFVAATGANLVTVDAAETFLEALSGVSAPEGKRKIIGRQFIRAFEGAVRDVLDGKTAEFLVQGTLYPDVVESGGGSGTANIKSHHNVGGLPDDLKFTLVEPLRLLFKDEVRAVGRELGLPEEIVARQPFPGPGLGIRIVGEVTAKRLDTLRHADSIVREELTAAGLDNQIWQCPVVLLADVRSVGVQGDGRTYGHPIVLRPVSSEDAMTADWTRVPYEVLERISTRITNEVAEVNRVVLDITSKPPATIEWE</sequence>
<accession>C1AHL0</accession>
<gene>
    <name evidence="1" type="primary">guaA</name>
    <name type="ordered locus">JTY_3466</name>
</gene>
<feature type="chain" id="PRO_1000190247" description="GMP synthase [glutamine-hydrolyzing]">
    <location>
        <begin position="1"/>
        <end position="525"/>
    </location>
</feature>
<feature type="domain" description="Glutamine amidotransferase type-1" evidence="1">
    <location>
        <begin position="16"/>
        <end position="205"/>
    </location>
</feature>
<feature type="domain" description="GMPS ATP-PPase" evidence="1">
    <location>
        <begin position="206"/>
        <end position="399"/>
    </location>
</feature>
<feature type="active site" description="Nucleophile" evidence="1">
    <location>
        <position position="93"/>
    </location>
</feature>
<feature type="active site" evidence="1">
    <location>
        <position position="179"/>
    </location>
</feature>
<feature type="active site" evidence="1">
    <location>
        <position position="181"/>
    </location>
</feature>
<feature type="binding site" evidence="1">
    <location>
        <begin position="233"/>
        <end position="239"/>
    </location>
    <ligand>
        <name>ATP</name>
        <dbReference type="ChEBI" id="CHEBI:30616"/>
    </ligand>
</feature>
<protein>
    <recommendedName>
        <fullName evidence="1">GMP synthase [glutamine-hydrolyzing]</fullName>
        <ecNumber evidence="1">6.3.5.2</ecNumber>
    </recommendedName>
    <alternativeName>
        <fullName evidence="1">GMP synthetase</fullName>
    </alternativeName>
    <alternativeName>
        <fullName evidence="1">Glutamine amidotransferase</fullName>
    </alternativeName>
</protein>
<organism>
    <name type="scientific">Mycobacterium bovis (strain BCG / Tokyo 172 / ATCC 35737 / TMC 1019)</name>
    <dbReference type="NCBI Taxonomy" id="561275"/>
    <lineage>
        <taxon>Bacteria</taxon>
        <taxon>Bacillati</taxon>
        <taxon>Actinomycetota</taxon>
        <taxon>Actinomycetes</taxon>
        <taxon>Mycobacteriales</taxon>
        <taxon>Mycobacteriaceae</taxon>
        <taxon>Mycobacterium</taxon>
        <taxon>Mycobacterium tuberculosis complex</taxon>
    </lineage>
</organism>
<comment type="function">
    <text evidence="1">Catalyzes the synthesis of GMP from XMP.</text>
</comment>
<comment type="catalytic activity">
    <reaction evidence="1">
        <text>XMP + L-glutamine + ATP + H2O = GMP + L-glutamate + AMP + diphosphate + 2 H(+)</text>
        <dbReference type="Rhea" id="RHEA:11680"/>
        <dbReference type="ChEBI" id="CHEBI:15377"/>
        <dbReference type="ChEBI" id="CHEBI:15378"/>
        <dbReference type="ChEBI" id="CHEBI:29985"/>
        <dbReference type="ChEBI" id="CHEBI:30616"/>
        <dbReference type="ChEBI" id="CHEBI:33019"/>
        <dbReference type="ChEBI" id="CHEBI:57464"/>
        <dbReference type="ChEBI" id="CHEBI:58115"/>
        <dbReference type="ChEBI" id="CHEBI:58359"/>
        <dbReference type="ChEBI" id="CHEBI:456215"/>
        <dbReference type="EC" id="6.3.5.2"/>
    </reaction>
</comment>
<comment type="pathway">
    <text evidence="1">Purine metabolism; GMP biosynthesis; GMP from XMP (L-Gln route): step 1/1.</text>
</comment>
<comment type="subunit">
    <text evidence="1">Homodimer.</text>
</comment>
<evidence type="ECO:0000255" key="1">
    <source>
        <dbReference type="HAMAP-Rule" id="MF_00344"/>
    </source>
</evidence>
<dbReference type="EC" id="6.3.5.2" evidence="1"/>
<dbReference type="EMBL" id="AP010918">
    <property type="protein sequence ID" value="BAH27739.1"/>
    <property type="molecule type" value="Genomic_DNA"/>
</dbReference>
<dbReference type="RefSeq" id="WP_003417952.1">
    <property type="nucleotide sequence ID" value="NZ_CP014566.1"/>
</dbReference>
<dbReference type="SMR" id="C1AHL0"/>
<dbReference type="MEROPS" id="C26.A07"/>
<dbReference type="GeneID" id="45427392"/>
<dbReference type="KEGG" id="mbt:JTY_3466"/>
<dbReference type="HOGENOM" id="CLU_014340_0_5_11"/>
<dbReference type="UniPathway" id="UPA00189">
    <property type="reaction ID" value="UER00296"/>
</dbReference>
<dbReference type="GO" id="GO:0005829">
    <property type="term" value="C:cytosol"/>
    <property type="evidence" value="ECO:0007669"/>
    <property type="project" value="TreeGrafter"/>
</dbReference>
<dbReference type="GO" id="GO:0005524">
    <property type="term" value="F:ATP binding"/>
    <property type="evidence" value="ECO:0007669"/>
    <property type="project" value="UniProtKB-UniRule"/>
</dbReference>
<dbReference type="GO" id="GO:0003921">
    <property type="term" value="F:GMP synthase activity"/>
    <property type="evidence" value="ECO:0007669"/>
    <property type="project" value="InterPro"/>
</dbReference>
<dbReference type="CDD" id="cd01742">
    <property type="entry name" value="GATase1_GMP_Synthase"/>
    <property type="match status" value="1"/>
</dbReference>
<dbReference type="CDD" id="cd01997">
    <property type="entry name" value="GMP_synthase_C"/>
    <property type="match status" value="1"/>
</dbReference>
<dbReference type="FunFam" id="3.30.300.10:FF:000002">
    <property type="entry name" value="GMP synthase [glutamine-hydrolyzing]"/>
    <property type="match status" value="1"/>
</dbReference>
<dbReference type="FunFam" id="3.40.50.620:FF:000001">
    <property type="entry name" value="GMP synthase [glutamine-hydrolyzing]"/>
    <property type="match status" value="1"/>
</dbReference>
<dbReference type="FunFam" id="3.40.50.880:FF:000001">
    <property type="entry name" value="GMP synthase [glutamine-hydrolyzing]"/>
    <property type="match status" value="1"/>
</dbReference>
<dbReference type="Gene3D" id="3.30.300.10">
    <property type="match status" value="1"/>
</dbReference>
<dbReference type="Gene3D" id="3.40.50.880">
    <property type="match status" value="1"/>
</dbReference>
<dbReference type="Gene3D" id="3.40.50.620">
    <property type="entry name" value="HUPs"/>
    <property type="match status" value="1"/>
</dbReference>
<dbReference type="HAMAP" id="MF_00344">
    <property type="entry name" value="GMP_synthase"/>
    <property type="match status" value="1"/>
</dbReference>
<dbReference type="InterPro" id="IPR029062">
    <property type="entry name" value="Class_I_gatase-like"/>
</dbReference>
<dbReference type="InterPro" id="IPR017926">
    <property type="entry name" value="GATASE"/>
</dbReference>
<dbReference type="InterPro" id="IPR001674">
    <property type="entry name" value="GMP_synth_C"/>
</dbReference>
<dbReference type="InterPro" id="IPR004739">
    <property type="entry name" value="GMP_synth_GATase"/>
</dbReference>
<dbReference type="InterPro" id="IPR022955">
    <property type="entry name" value="GMP_synthase"/>
</dbReference>
<dbReference type="InterPro" id="IPR025777">
    <property type="entry name" value="GMPS_ATP_PPase_dom"/>
</dbReference>
<dbReference type="InterPro" id="IPR022310">
    <property type="entry name" value="NAD/GMP_synthase"/>
</dbReference>
<dbReference type="InterPro" id="IPR014729">
    <property type="entry name" value="Rossmann-like_a/b/a_fold"/>
</dbReference>
<dbReference type="NCBIfam" id="TIGR00884">
    <property type="entry name" value="guaA_Cterm"/>
    <property type="match status" value="1"/>
</dbReference>
<dbReference type="NCBIfam" id="TIGR00888">
    <property type="entry name" value="guaA_Nterm"/>
    <property type="match status" value="1"/>
</dbReference>
<dbReference type="NCBIfam" id="NF000848">
    <property type="entry name" value="PRK00074.1"/>
    <property type="match status" value="1"/>
</dbReference>
<dbReference type="PANTHER" id="PTHR11922:SF2">
    <property type="entry name" value="GMP SYNTHASE [GLUTAMINE-HYDROLYZING]"/>
    <property type="match status" value="1"/>
</dbReference>
<dbReference type="PANTHER" id="PTHR11922">
    <property type="entry name" value="GMP SYNTHASE-RELATED"/>
    <property type="match status" value="1"/>
</dbReference>
<dbReference type="Pfam" id="PF00117">
    <property type="entry name" value="GATase"/>
    <property type="match status" value="1"/>
</dbReference>
<dbReference type="Pfam" id="PF00958">
    <property type="entry name" value="GMP_synt_C"/>
    <property type="match status" value="1"/>
</dbReference>
<dbReference type="Pfam" id="PF02540">
    <property type="entry name" value="NAD_synthase"/>
    <property type="match status" value="1"/>
</dbReference>
<dbReference type="PRINTS" id="PR00097">
    <property type="entry name" value="ANTSNTHASEII"/>
</dbReference>
<dbReference type="PRINTS" id="PR00099">
    <property type="entry name" value="CPSGATASE"/>
</dbReference>
<dbReference type="PRINTS" id="PR00096">
    <property type="entry name" value="GATASE"/>
</dbReference>
<dbReference type="SUPFAM" id="SSF52402">
    <property type="entry name" value="Adenine nucleotide alpha hydrolases-like"/>
    <property type="match status" value="1"/>
</dbReference>
<dbReference type="SUPFAM" id="SSF52317">
    <property type="entry name" value="Class I glutamine amidotransferase-like"/>
    <property type="match status" value="1"/>
</dbReference>
<dbReference type="SUPFAM" id="SSF54810">
    <property type="entry name" value="GMP synthetase C-terminal dimerisation domain"/>
    <property type="match status" value="1"/>
</dbReference>
<dbReference type="PROSITE" id="PS51273">
    <property type="entry name" value="GATASE_TYPE_1"/>
    <property type="match status" value="1"/>
</dbReference>
<dbReference type="PROSITE" id="PS51553">
    <property type="entry name" value="GMPS_ATP_PPASE"/>
    <property type="match status" value="1"/>
</dbReference>